<reference key="1">
    <citation type="journal article" date="2006" name="Proc. Natl. Acad. Sci. U.S.A.">
        <title>Burkholderia xenovorans LB400 harbors a multi-replicon, 9.73-Mbp genome shaped for versatility.</title>
        <authorList>
            <person name="Chain P.S.G."/>
            <person name="Denef V.J."/>
            <person name="Konstantinidis K.T."/>
            <person name="Vergez L.M."/>
            <person name="Agullo L."/>
            <person name="Reyes V.L."/>
            <person name="Hauser L."/>
            <person name="Cordova M."/>
            <person name="Gomez L."/>
            <person name="Gonzalez M."/>
            <person name="Land M."/>
            <person name="Lao V."/>
            <person name="Larimer F."/>
            <person name="LiPuma J.J."/>
            <person name="Mahenthiralingam E."/>
            <person name="Malfatti S.A."/>
            <person name="Marx C.J."/>
            <person name="Parnell J.J."/>
            <person name="Ramette A."/>
            <person name="Richardson P."/>
            <person name="Seeger M."/>
            <person name="Smith D."/>
            <person name="Spilker T."/>
            <person name="Sul W.J."/>
            <person name="Tsoi T.V."/>
            <person name="Ulrich L.E."/>
            <person name="Zhulin I.B."/>
            <person name="Tiedje J.M."/>
        </authorList>
    </citation>
    <scope>NUCLEOTIDE SEQUENCE [LARGE SCALE GENOMIC DNA]</scope>
    <source>
        <strain>LB400</strain>
    </source>
</reference>
<gene>
    <name evidence="1" type="primary">pxpA</name>
    <name type="ordered locus">Bxeno_A4200</name>
    <name type="ORF">Bxe_A0193</name>
</gene>
<keyword id="KW-0067">ATP-binding</keyword>
<keyword id="KW-0378">Hydrolase</keyword>
<keyword id="KW-0547">Nucleotide-binding</keyword>
<keyword id="KW-1185">Reference proteome</keyword>
<proteinExistence type="inferred from homology"/>
<dbReference type="EC" id="3.5.2.9" evidence="1"/>
<dbReference type="EMBL" id="CP000270">
    <property type="protein sequence ID" value="ABE32738.1"/>
    <property type="molecule type" value="Genomic_DNA"/>
</dbReference>
<dbReference type="RefSeq" id="WP_011490161.1">
    <property type="nucleotide sequence ID" value="NC_007951.1"/>
</dbReference>
<dbReference type="SMR" id="Q13T51"/>
<dbReference type="STRING" id="266265.Bxe_A0193"/>
<dbReference type="KEGG" id="bxb:DR64_2366"/>
<dbReference type="KEGG" id="bxe:Bxe_A0193"/>
<dbReference type="PATRIC" id="fig|266265.5.peg.4418"/>
<dbReference type="eggNOG" id="COG1540">
    <property type="taxonomic scope" value="Bacteria"/>
</dbReference>
<dbReference type="OrthoDB" id="9773478at2"/>
<dbReference type="Proteomes" id="UP000001817">
    <property type="component" value="Chromosome 1"/>
</dbReference>
<dbReference type="GO" id="GO:0017168">
    <property type="term" value="F:5-oxoprolinase (ATP-hydrolyzing) activity"/>
    <property type="evidence" value="ECO:0007669"/>
    <property type="project" value="UniProtKB-UniRule"/>
</dbReference>
<dbReference type="GO" id="GO:0005524">
    <property type="term" value="F:ATP binding"/>
    <property type="evidence" value="ECO:0007669"/>
    <property type="project" value="UniProtKB-UniRule"/>
</dbReference>
<dbReference type="GO" id="GO:0005975">
    <property type="term" value="P:carbohydrate metabolic process"/>
    <property type="evidence" value="ECO:0007669"/>
    <property type="project" value="InterPro"/>
</dbReference>
<dbReference type="CDD" id="cd10800">
    <property type="entry name" value="LamB_YcsF_YbgL_like"/>
    <property type="match status" value="1"/>
</dbReference>
<dbReference type="Gene3D" id="3.20.20.370">
    <property type="entry name" value="Glycoside hydrolase/deacetylase"/>
    <property type="match status" value="1"/>
</dbReference>
<dbReference type="HAMAP" id="MF_00691">
    <property type="entry name" value="PxpA"/>
    <property type="match status" value="1"/>
</dbReference>
<dbReference type="InterPro" id="IPR011330">
    <property type="entry name" value="Glyco_hydro/deAcase_b/a-brl"/>
</dbReference>
<dbReference type="InterPro" id="IPR005501">
    <property type="entry name" value="LamB/YcsF/PxpA-like"/>
</dbReference>
<dbReference type="NCBIfam" id="NF003814">
    <property type="entry name" value="PRK05406.1-3"/>
    <property type="match status" value="1"/>
</dbReference>
<dbReference type="NCBIfam" id="NF003815">
    <property type="entry name" value="PRK05406.1-4"/>
    <property type="match status" value="1"/>
</dbReference>
<dbReference type="NCBIfam" id="NF003816">
    <property type="entry name" value="PRK05406.1-5"/>
    <property type="match status" value="1"/>
</dbReference>
<dbReference type="PANTHER" id="PTHR30292:SF0">
    <property type="entry name" value="5-OXOPROLINASE SUBUNIT A"/>
    <property type="match status" value="1"/>
</dbReference>
<dbReference type="PANTHER" id="PTHR30292">
    <property type="entry name" value="UNCHARACTERIZED PROTEIN YBGL-RELATED"/>
    <property type="match status" value="1"/>
</dbReference>
<dbReference type="Pfam" id="PF03746">
    <property type="entry name" value="LamB_YcsF"/>
    <property type="match status" value="1"/>
</dbReference>
<dbReference type="SUPFAM" id="SSF88713">
    <property type="entry name" value="Glycoside hydrolase/deacetylase"/>
    <property type="match status" value="1"/>
</dbReference>
<comment type="function">
    <text evidence="1">Catalyzes the cleavage of 5-oxoproline to form L-glutamate coupled to the hydrolysis of ATP to ADP and inorganic phosphate.</text>
</comment>
<comment type="catalytic activity">
    <reaction evidence="1">
        <text>5-oxo-L-proline + ATP + 2 H2O = L-glutamate + ADP + phosphate + H(+)</text>
        <dbReference type="Rhea" id="RHEA:10348"/>
        <dbReference type="ChEBI" id="CHEBI:15377"/>
        <dbReference type="ChEBI" id="CHEBI:15378"/>
        <dbReference type="ChEBI" id="CHEBI:29985"/>
        <dbReference type="ChEBI" id="CHEBI:30616"/>
        <dbReference type="ChEBI" id="CHEBI:43474"/>
        <dbReference type="ChEBI" id="CHEBI:58402"/>
        <dbReference type="ChEBI" id="CHEBI:456216"/>
        <dbReference type="EC" id="3.5.2.9"/>
    </reaction>
</comment>
<comment type="subunit">
    <text evidence="1">Forms a complex composed of PxpA, PxpB and PxpC.</text>
</comment>
<comment type="similarity">
    <text evidence="1">Belongs to the LamB/PxpA family.</text>
</comment>
<evidence type="ECO:0000255" key="1">
    <source>
        <dbReference type="HAMAP-Rule" id="MF_00691"/>
    </source>
</evidence>
<name>PXPA_PARXL</name>
<protein>
    <recommendedName>
        <fullName evidence="1">5-oxoprolinase subunit A</fullName>
        <shortName evidence="1">5-OPase subunit A</shortName>
        <ecNumber evidence="1">3.5.2.9</ecNumber>
    </recommendedName>
    <alternativeName>
        <fullName evidence="1">5-oxoprolinase (ATP-hydrolyzing) subunit A</fullName>
    </alternativeName>
</protein>
<accession>Q13T51</accession>
<feature type="chain" id="PRO_1000045195" description="5-oxoprolinase subunit A">
    <location>
        <begin position="1"/>
        <end position="250"/>
    </location>
</feature>
<organism>
    <name type="scientific">Paraburkholderia xenovorans (strain LB400)</name>
    <dbReference type="NCBI Taxonomy" id="266265"/>
    <lineage>
        <taxon>Bacteria</taxon>
        <taxon>Pseudomonadati</taxon>
        <taxon>Pseudomonadota</taxon>
        <taxon>Betaproteobacteria</taxon>
        <taxon>Burkholderiales</taxon>
        <taxon>Burkholderiaceae</taxon>
        <taxon>Paraburkholderia</taxon>
    </lineage>
</organism>
<sequence length="250" mass="26294">MEIDLNADLGEGCGSDEALLDLVSSANIACGWHAGGANAMRDCVRWAVQKGVSIGAHPSFNDPENFGRKEMDLPANDIYAGVLYQLGALSAIAQAEGGRVAHVKPHGALYNQAARDSRIADAIVSAVHDFDPSVAVFALANSGLVTAARNVGLIAVEEVFADRGYRADGSLVPRKEPGALLDDEDKVLARTLSMIREQRVQAVDGQWVPLNAQTICLHGDGPHALAFARRIRGALQDAGIEVHAAGAARA</sequence>